<organism>
    <name type="scientific">Komagataella phaffii (strain GS115 / ATCC 20864)</name>
    <name type="common">Yeast</name>
    <name type="synonym">Pichia pastoris</name>
    <dbReference type="NCBI Taxonomy" id="644223"/>
    <lineage>
        <taxon>Eukaryota</taxon>
        <taxon>Fungi</taxon>
        <taxon>Dikarya</taxon>
        <taxon>Ascomycota</taxon>
        <taxon>Saccharomycotina</taxon>
        <taxon>Pichiomycetes</taxon>
        <taxon>Pichiales</taxon>
        <taxon>Pichiaceae</taxon>
        <taxon>Komagataella</taxon>
    </lineage>
</organism>
<protein>
    <recommendedName>
        <fullName evidence="1">Ceramide glucosyltransferase</fullName>
        <ecNumber evidence="4">2.4.1.80</ecNumber>
    </recommendedName>
    <alternativeName>
        <fullName>GLCT-1</fullName>
    </alternativeName>
    <alternativeName>
        <fullName evidence="7">Glucosylceramide synthase</fullName>
        <shortName>GCS</shortName>
    </alternativeName>
    <alternativeName>
        <fullName evidence="8">UDP-glucose ceramide glucosyltransferase</fullName>
    </alternativeName>
    <alternativeName>
        <fullName>UDP-glucose:N-acylsphingosine D-glucosyltransferase</fullName>
    </alternativeName>
</protein>
<feature type="chain" id="PRO_5002942221" description="Ceramide glucosyltransferase">
    <location>
        <begin position="1"/>
        <end position="509"/>
    </location>
</feature>
<feature type="topological domain" description="Lumenal" evidence="9">
    <location>
        <begin position="1"/>
        <end position="42"/>
    </location>
</feature>
<feature type="transmembrane region" description="Helical" evidence="3">
    <location>
        <begin position="43"/>
        <end position="63"/>
    </location>
</feature>
<feature type="topological domain" description="Cytoplasmic" evidence="2">
    <location>
        <begin position="64"/>
        <end position="384"/>
    </location>
</feature>
<feature type="transmembrane region" description="Helical" evidence="3">
    <location>
        <begin position="385"/>
        <end position="405"/>
    </location>
</feature>
<feature type="topological domain" description="Lumenal" evidence="9">
    <location>
        <begin position="406"/>
        <end position="408"/>
    </location>
</feature>
<feature type="transmembrane region" description="Helical" evidence="3">
    <location>
        <begin position="409"/>
        <end position="429"/>
    </location>
</feature>
<feature type="topological domain" description="Cytoplasmic" evidence="9">
    <location>
        <begin position="430"/>
        <end position="466"/>
    </location>
</feature>
<feature type="transmembrane region" description="Helical" evidence="3">
    <location>
        <begin position="467"/>
        <end position="487"/>
    </location>
</feature>
<feature type="topological domain" description="Lumenal" evidence="9">
    <location>
        <begin position="488"/>
        <end position="509"/>
    </location>
</feature>
<feature type="short sequence motif" description="D1" evidence="9">
    <location>
        <position position="123"/>
    </location>
</feature>
<feature type="short sequence motif" description="D2" evidence="9">
    <location>
        <position position="179"/>
    </location>
</feature>
<feature type="short sequence motif" description="D3" evidence="9">
    <location>
        <position position="321"/>
    </location>
</feature>
<feature type="short sequence motif" description="(Q/R)XXRW" evidence="9">
    <location>
        <begin position="361"/>
        <end position="365"/>
    </location>
</feature>
<feature type="active site" description="Proton acceptor" evidence="2">
    <location>
        <position position="321"/>
    </location>
</feature>
<gene>
    <name type="ordered locus">PAS_chr3_0357</name>
</gene>
<evidence type="ECO:0000250" key="1">
    <source>
        <dbReference type="UniProtKB" id="Q16739"/>
    </source>
</evidence>
<evidence type="ECO:0000250" key="2">
    <source>
        <dbReference type="UniProtKB" id="Q9R0E0"/>
    </source>
</evidence>
<evidence type="ECO:0000255" key="3"/>
<evidence type="ECO:0000269" key="4">
    <source>
    </source>
</evidence>
<evidence type="ECO:0000269" key="5">
    <source>
    </source>
</evidence>
<evidence type="ECO:0000269" key="6">
    <source>
    </source>
</evidence>
<evidence type="ECO:0000303" key="7">
    <source>
    </source>
</evidence>
<evidence type="ECO:0000303" key="8">
    <source>
    </source>
</evidence>
<evidence type="ECO:0000305" key="9"/>
<evidence type="ECO:0000305" key="10">
    <source>
    </source>
</evidence>
<accession>C4R4B3</accession>
<accession>Q96V37</accession>
<reference key="1">
    <citation type="journal article" date="2001" name="J. Biol. Chem.">
        <title>Glucosylceramide synthases, a gene family responsible for the biosynthesis of glucosphingolipids in animals, plants, and fungi.</title>
        <authorList>
            <person name="Leipelt M."/>
            <person name="Warnecke D."/>
            <person name="Zahringer U."/>
            <person name="Ott C."/>
            <person name="Muller F."/>
            <person name="Hube B."/>
            <person name="Heinz E."/>
        </authorList>
    </citation>
    <scope>NUCLEOTIDE SEQUENCE [GENOMIC DNA]</scope>
    <scope>FUNCTION</scope>
    <scope>CATALYTIC ACTIVITY</scope>
    <scope>PATHWAY</scope>
    <scope>DISRUPTION PHENOTYPE</scope>
    <source>
        <strain>GS115 / ATCC 20864</strain>
    </source>
</reference>
<reference key="2">
    <citation type="journal article" date="2009" name="Nat. Biotechnol.">
        <title>Genome sequence of the recombinant protein production host Pichia pastoris.</title>
        <authorList>
            <person name="De Schutter K."/>
            <person name="Lin Y.-C."/>
            <person name="Tiels P."/>
            <person name="Van Hecke A."/>
            <person name="Glinka S."/>
            <person name="Weber-Lehmann J."/>
            <person name="Rouze P."/>
            <person name="Van de Peer Y."/>
            <person name="Callewaert N."/>
        </authorList>
    </citation>
    <scope>NUCLEOTIDE SEQUENCE [LARGE SCALE GENOMIC DNA]</scope>
    <source>
        <strain>GS115 / ATCC 20864</strain>
    </source>
</reference>
<reference key="3">
    <citation type="journal article" date="2004" name="J. Biol. Chem.">
        <title>Defensins from insects and plants interact with fungal glucosylceramides.</title>
        <authorList>
            <person name="Thevissen K."/>
            <person name="Warnecke D.C."/>
            <person name="Francois I.E."/>
            <person name="Leipelt M."/>
            <person name="Heinz E."/>
            <person name="Ott C."/>
            <person name="Zaehringer U."/>
            <person name="Thomma B.P."/>
            <person name="Ferket K.K."/>
            <person name="Cammue B.P."/>
        </authorList>
    </citation>
    <scope>DISRUPTION PHENOTYPE</scope>
</reference>
<reference key="4">
    <citation type="journal article" date="2009" name="Eukaryot. Cell">
        <title>Sphingolipid C-9 methyltransferases are important for growth and virulence but not for sensitivity to antifungal plant defensins in Fusarium graminearum.</title>
        <authorList>
            <person name="Ramamoorthy V."/>
            <person name="Cahoon E.B."/>
            <person name="Thokala M."/>
            <person name="Kaur J."/>
            <person name="Li J."/>
            <person name="Shah D.M."/>
        </authorList>
    </citation>
    <scope>DISRUPTION PHENOTYPE</scope>
</reference>
<dbReference type="EC" id="2.4.1.80" evidence="4"/>
<dbReference type="EMBL" id="AF364403">
    <property type="protein sequence ID" value="AAK73020.1"/>
    <property type="molecule type" value="Genomic_DNA"/>
</dbReference>
<dbReference type="EMBL" id="FN392321">
    <property type="protein sequence ID" value="CAY70399.1"/>
    <property type="molecule type" value="Genomic_DNA"/>
</dbReference>
<dbReference type="RefSeq" id="XP_002492578.1">
    <property type="nucleotide sequence ID" value="XM_002492533.1"/>
</dbReference>
<dbReference type="STRING" id="644223.C4R4B3"/>
<dbReference type="CAZy" id="GT21">
    <property type="family name" value="Glycosyltransferase Family 21"/>
</dbReference>
<dbReference type="EnsemblFungi" id="CAY70399">
    <property type="protein sequence ID" value="CAY70399"/>
    <property type="gene ID" value="PAS_chr3_0357"/>
</dbReference>
<dbReference type="GeneID" id="8199490"/>
<dbReference type="KEGG" id="ppa:PAS_chr3_0357"/>
<dbReference type="eggNOG" id="KOG2547">
    <property type="taxonomic scope" value="Eukaryota"/>
</dbReference>
<dbReference type="HOGENOM" id="CLU_030898_1_0_1"/>
<dbReference type="InParanoid" id="C4R4B3"/>
<dbReference type="OMA" id="IVWIIDC"/>
<dbReference type="OrthoDB" id="1483400at2759"/>
<dbReference type="UniPathway" id="UPA00222"/>
<dbReference type="Proteomes" id="UP000000314">
    <property type="component" value="Chromosome 3"/>
</dbReference>
<dbReference type="GO" id="GO:0000139">
    <property type="term" value="C:Golgi membrane"/>
    <property type="evidence" value="ECO:0007669"/>
    <property type="project" value="UniProtKB-SubCell"/>
</dbReference>
<dbReference type="GO" id="GO:0008120">
    <property type="term" value="F:ceramide glucosyltransferase activity"/>
    <property type="evidence" value="ECO:0007669"/>
    <property type="project" value="UniProtKB-EC"/>
</dbReference>
<dbReference type="GO" id="GO:0006679">
    <property type="term" value="P:glucosylceramide biosynthetic process"/>
    <property type="evidence" value="ECO:0007669"/>
    <property type="project" value="TreeGrafter"/>
</dbReference>
<dbReference type="CDD" id="cd02520">
    <property type="entry name" value="Glucosylceramide_synthase"/>
    <property type="match status" value="1"/>
</dbReference>
<dbReference type="Gene3D" id="3.90.550.10">
    <property type="entry name" value="Spore Coat Polysaccharide Biosynthesis Protein SpsA, Chain A"/>
    <property type="match status" value="1"/>
</dbReference>
<dbReference type="InterPro" id="IPR025993">
    <property type="entry name" value="Ceramide_glucosylTrfase"/>
</dbReference>
<dbReference type="InterPro" id="IPR029044">
    <property type="entry name" value="Nucleotide-diphossugar_trans"/>
</dbReference>
<dbReference type="PANTHER" id="PTHR12726">
    <property type="entry name" value="CERAMIDE GLUCOSYLTRANSFERASE"/>
    <property type="match status" value="1"/>
</dbReference>
<dbReference type="PANTHER" id="PTHR12726:SF0">
    <property type="entry name" value="CERAMIDE GLUCOSYLTRANSFERASE"/>
    <property type="match status" value="1"/>
</dbReference>
<dbReference type="Pfam" id="PF13506">
    <property type="entry name" value="Glyco_transf_21"/>
    <property type="match status" value="1"/>
</dbReference>
<dbReference type="SUPFAM" id="SSF53448">
    <property type="entry name" value="Nucleotide-diphospho-sugar transferases"/>
    <property type="match status" value="1"/>
</dbReference>
<proteinExistence type="evidence at protein level"/>
<comment type="function">
    <text evidence="4">Catalyzes the final step in the biosynthesis of the membrane lipid glucosylceramide (GluCer), the transfer of glucose to ceramide. Glucosylceramides play important roles in growth, differentiation and pathogenicity.</text>
</comment>
<comment type="catalytic activity">
    <reaction evidence="4">
        <text>an N-acylsphing-4-enine + UDP-alpha-D-glucose = a beta-D-glucosyl-(1&lt;-&gt;1')-N-acylsphing-4-enine + UDP + H(+)</text>
        <dbReference type="Rhea" id="RHEA:12088"/>
        <dbReference type="ChEBI" id="CHEBI:15378"/>
        <dbReference type="ChEBI" id="CHEBI:22801"/>
        <dbReference type="ChEBI" id="CHEBI:52639"/>
        <dbReference type="ChEBI" id="CHEBI:58223"/>
        <dbReference type="ChEBI" id="CHEBI:58885"/>
        <dbReference type="EC" id="2.4.1.80"/>
    </reaction>
</comment>
<comment type="pathway">
    <text evidence="10">Lipid metabolism; sphingolipid metabolism.</text>
</comment>
<comment type="subcellular location">
    <subcellularLocation>
        <location evidence="2">Golgi apparatus membrane</location>
        <topology evidence="3">Multi-pass membrane protein</topology>
    </subcellularLocation>
</comment>
<comment type="domain">
    <text evidence="2">The D1, D2, D3, (Q/R)XXRW motif is a critical part of the GCS active site, involved in catalysis and UDP-sugar binding.</text>
</comment>
<comment type="disruption phenotype">
    <text evidence="4 5 6">Results in complete loss of glucosylceramides (GluCers) in mutant cells (PubMed:11443131). Shows increased resistance to plant defensins MsDef1 and RsAFP2, and to heliomicin, a defensin-like peptide from the insect Heliothis virescens (PubMed:14604982, PubMed:19028992).</text>
</comment>
<comment type="similarity">
    <text evidence="9">Belongs to the glycosyltransferase 2 family.</text>
</comment>
<sequence length="509" mass="57164">MIMQLGLTSLAFLALKCDAYNIAPKIDTPNVEPFAPSGGLKLLAIVAIIWYVVVLLVAYYGFFEIMQKFSKRKTLPVPPQVEGVTILRPIKGIDPEMELCLQSAFDQDYPKFEIIICVESENDPGIGVAEALIRKYPHVDARILKGDSHNPDHFGPNPKVNNLAKGYSAGKYDIMWILDSNVWVCSGALSRSVDALNRSLDNGRSTFDFQTGKGRKVNLVHHVPMAISINPQTGTNLDEMFLFTSHSKFYISINKAALAPCVNGKSNLYRRSELDLAVKRLGKGSEPSLDGTTGILAKDAAYYGSKPGQGLRFFARYIGEDNMIATALWFQNGGRTGLTGDAAIQPLGGVNSTSLKNYLLRRIRWLRVRKHMVLEATLLEPTTECLLCGTFGTFAISTLFLQSYFNWKFFIFHLLVWMVTDYTQFHILLTNASQDTATCNVPYFAEPNFNAYGSPFESSNLRTFHRWVLYWLLREVLALPIWISAMLGTRIIWRNRPFRINVDLSAEEL</sequence>
<name>CEGT_KOMPG</name>
<keyword id="KW-0328">Glycosyltransferase</keyword>
<keyword id="KW-0333">Golgi apparatus</keyword>
<keyword id="KW-0443">Lipid metabolism</keyword>
<keyword id="KW-0472">Membrane</keyword>
<keyword id="KW-1185">Reference proteome</keyword>
<keyword id="KW-0746">Sphingolipid metabolism</keyword>
<keyword id="KW-0808">Transferase</keyword>
<keyword id="KW-0812">Transmembrane</keyword>
<keyword id="KW-1133">Transmembrane helix</keyword>